<proteinExistence type="evidence at protein level"/>
<protein>
    <recommendedName>
        <fullName>Contactin-associated protein-like 3B</fullName>
    </recommendedName>
    <alternativeName>
        <fullName>Cell recognition molecule Caspr3b</fullName>
    </alternativeName>
</protein>
<sequence length="1288" mass="140415">MASVAWAVLKVLLLLPTQTWSPVGAGNPPDCDSPLASALPRSSFSSSSELSSSHGPGFSRLNRRDGAGGWTPLVSNKYQWLQIDLGERMEVTAVATQGGYGSSDWVTSYLLMFSDGGRNWKQYRREESIWGFPGNTNADSVVHYRLQPPFEARFLRFLPLAWNPRGRIGMRIEVYGCAYKSEVVYFDGQSALLYTLDKKPLKPIRDVISLKFKAMQSNGILLHREGQHGNHITLELIKGKLVFFLNSGNAKLPSTIAPVTLTLGSLLDDQHWHSVLIELLDTQVNFTVDKHTHHFQAKGDSSNLDLNFEISFGGILSPGRSRAFTRKSFHGCLENLYYNGVDVTELAKKHKPQILMMGNVSFSCPQPQTVPVTFLSSRSYLALPGNSGEDKVSVTFQFRTWNRAGHLLFGELQRGSGSFVLFLKDGKLKLSLFQAGQSPRNVTAGAGLNDGQWHSVSFSAKWSHMNVVVDDDTAVQPLVAVLIDSGDTYYFGGCLGNSSGSGCKSPLGGFQGCLRLITIGDKAVDPILVQQGALGSFRDLQIDSCGITDRCLPSYCEHGGECSQSWDTFSCDCLGTGYTGETCHSSLYEQSCEAHKHRGNPSGLYYIDADGSGPLGPFLVYCNMTADSAWTVVRHGGPDAVTLRGAPSGHPLSAVSFAYAAGAGQLRAAVNLAERCEQRLALRCGTARRPDSRDGTPLSWWVGRTNETHTSWGGSLPDAQKCTCGLEGNCIDSQYYCNCDAGQNEWTSDTIVLSQKEHLPVTQIVMTDTGQPHSEADYTLGPLLCRGDKSFWNSASFNTETSYLHFPAFHGELTADVCFFFKTTVSSGVFMENLGITDFIRIELRAPTEVTFSFDVGNGPCEVTVQSPTPFNDNQWHHVRAERNVKGASLQVDQLPQKMQPAPADGHVRLQLNSQLFIGGTATRQRGFLGCIRSLQLNGVALDLEERATVTPGVEPGCAGHCSTYGHLCRNGGRCREKRRGVTCDCAFSAYDGPFCSNEISAYFATGSSMTYHFQEHYTLSENSSSLVSSLHRDVTLTREMITLSFRTTRTPSLLLYVSSFYEEYLSVILANNGSLQIRYKLDRHQNPDAFTFDFKNMADGQLHQVKINREEAVVMVEVNQSAKKQVILSSGTEFNAVKSLILGKVLEAAGADPDTRRAATSGFTGCLSAVRFGCAAPLKAALRPSGPSRVTVRGHVAPMARCAAGAASGSPARELAPRLAGGAGRSGPVDEGEPLVNADRRDSAVIGGVIAVEIFILLCITAIAIRIYQQRKLRKENESKVSKKEEC</sequence>
<organism>
    <name type="scientific">Homo sapiens</name>
    <name type="common">Human</name>
    <dbReference type="NCBI Taxonomy" id="9606"/>
    <lineage>
        <taxon>Eukaryota</taxon>
        <taxon>Metazoa</taxon>
        <taxon>Chordata</taxon>
        <taxon>Craniata</taxon>
        <taxon>Vertebrata</taxon>
        <taxon>Euteleostomi</taxon>
        <taxon>Mammalia</taxon>
        <taxon>Eutheria</taxon>
        <taxon>Euarchontoglires</taxon>
        <taxon>Primates</taxon>
        <taxon>Haplorrhini</taxon>
        <taxon>Catarrhini</taxon>
        <taxon>Hominidae</taxon>
        <taxon>Homo</taxon>
    </lineage>
</organism>
<gene>
    <name type="primary">CNTNAP3B</name>
    <name type="synonym">CASPR3B</name>
</gene>
<reference key="1">
    <citation type="journal article" date="2004" name="Nat. Genet.">
        <title>Complete sequencing and characterization of 21,243 full-length human cDNAs.</title>
        <authorList>
            <person name="Ota T."/>
            <person name="Suzuki Y."/>
            <person name="Nishikawa T."/>
            <person name="Otsuki T."/>
            <person name="Sugiyama T."/>
            <person name="Irie R."/>
            <person name="Wakamatsu A."/>
            <person name="Hayashi K."/>
            <person name="Sato H."/>
            <person name="Nagai K."/>
            <person name="Kimura K."/>
            <person name="Makita H."/>
            <person name="Sekine M."/>
            <person name="Obayashi M."/>
            <person name="Nishi T."/>
            <person name="Shibahara T."/>
            <person name="Tanaka T."/>
            <person name="Ishii S."/>
            <person name="Yamamoto J."/>
            <person name="Saito K."/>
            <person name="Kawai Y."/>
            <person name="Isono Y."/>
            <person name="Nakamura Y."/>
            <person name="Nagahari K."/>
            <person name="Murakami K."/>
            <person name="Yasuda T."/>
            <person name="Iwayanagi T."/>
            <person name="Wagatsuma M."/>
            <person name="Shiratori A."/>
            <person name="Sudo H."/>
            <person name="Hosoiri T."/>
            <person name="Kaku Y."/>
            <person name="Kodaira H."/>
            <person name="Kondo H."/>
            <person name="Sugawara M."/>
            <person name="Takahashi M."/>
            <person name="Kanda K."/>
            <person name="Yokoi T."/>
            <person name="Furuya T."/>
            <person name="Kikkawa E."/>
            <person name="Omura Y."/>
            <person name="Abe K."/>
            <person name="Kamihara K."/>
            <person name="Katsuta N."/>
            <person name="Sato K."/>
            <person name="Tanikawa M."/>
            <person name="Yamazaki M."/>
            <person name="Ninomiya K."/>
            <person name="Ishibashi T."/>
            <person name="Yamashita H."/>
            <person name="Murakawa K."/>
            <person name="Fujimori K."/>
            <person name="Tanai H."/>
            <person name="Kimata M."/>
            <person name="Watanabe M."/>
            <person name="Hiraoka S."/>
            <person name="Chiba Y."/>
            <person name="Ishida S."/>
            <person name="Ono Y."/>
            <person name="Takiguchi S."/>
            <person name="Watanabe S."/>
            <person name="Yosida M."/>
            <person name="Hotuta T."/>
            <person name="Kusano J."/>
            <person name="Kanehori K."/>
            <person name="Takahashi-Fujii A."/>
            <person name="Hara H."/>
            <person name="Tanase T.-O."/>
            <person name="Nomura Y."/>
            <person name="Togiya S."/>
            <person name="Komai F."/>
            <person name="Hara R."/>
            <person name="Takeuchi K."/>
            <person name="Arita M."/>
            <person name="Imose N."/>
            <person name="Musashino K."/>
            <person name="Yuuki H."/>
            <person name="Oshima A."/>
            <person name="Sasaki N."/>
            <person name="Aotsuka S."/>
            <person name="Yoshikawa Y."/>
            <person name="Matsunawa H."/>
            <person name="Ichihara T."/>
            <person name="Shiohata N."/>
            <person name="Sano S."/>
            <person name="Moriya S."/>
            <person name="Momiyama H."/>
            <person name="Satoh N."/>
            <person name="Takami S."/>
            <person name="Terashima Y."/>
            <person name="Suzuki O."/>
            <person name="Nakagawa S."/>
            <person name="Senoh A."/>
            <person name="Mizoguchi H."/>
            <person name="Goto Y."/>
            <person name="Shimizu F."/>
            <person name="Wakebe H."/>
            <person name="Hishigaki H."/>
            <person name="Watanabe T."/>
            <person name="Sugiyama A."/>
            <person name="Takemoto M."/>
            <person name="Kawakami B."/>
            <person name="Yamazaki M."/>
            <person name="Watanabe K."/>
            <person name="Kumagai A."/>
            <person name="Itakura S."/>
            <person name="Fukuzumi Y."/>
            <person name="Fujimori Y."/>
            <person name="Komiyama M."/>
            <person name="Tashiro H."/>
            <person name="Tanigami A."/>
            <person name="Fujiwara T."/>
            <person name="Ono T."/>
            <person name="Yamada K."/>
            <person name="Fujii Y."/>
            <person name="Ozaki K."/>
            <person name="Hirao M."/>
            <person name="Ohmori Y."/>
            <person name="Kawabata A."/>
            <person name="Hikiji T."/>
            <person name="Kobatake N."/>
            <person name="Inagaki H."/>
            <person name="Ikema Y."/>
            <person name="Okamoto S."/>
            <person name="Okitani R."/>
            <person name="Kawakami T."/>
            <person name="Noguchi S."/>
            <person name="Itoh T."/>
            <person name="Shigeta K."/>
            <person name="Senba T."/>
            <person name="Matsumura K."/>
            <person name="Nakajima Y."/>
            <person name="Mizuno T."/>
            <person name="Morinaga M."/>
            <person name="Sasaki M."/>
            <person name="Togashi T."/>
            <person name="Oyama M."/>
            <person name="Hata H."/>
            <person name="Watanabe M."/>
            <person name="Komatsu T."/>
            <person name="Mizushima-Sugano J."/>
            <person name="Satoh T."/>
            <person name="Shirai Y."/>
            <person name="Takahashi Y."/>
            <person name="Nakagawa K."/>
            <person name="Okumura K."/>
            <person name="Nagase T."/>
            <person name="Nomura N."/>
            <person name="Kikuchi H."/>
            <person name="Masuho Y."/>
            <person name="Yamashita R."/>
            <person name="Nakai K."/>
            <person name="Yada T."/>
            <person name="Nakamura Y."/>
            <person name="Ohara O."/>
            <person name="Isogai T."/>
            <person name="Sugano S."/>
        </authorList>
    </citation>
    <scope>NUCLEOTIDE SEQUENCE [LARGE SCALE MRNA] (ISOFORM 2)</scope>
    <source>
        <tissue>Glial tumor</tissue>
        <tissue>Teratocarcinoma</tissue>
    </source>
</reference>
<reference key="2">
    <citation type="journal article" date="2004" name="Nature">
        <title>DNA sequence and analysis of human chromosome 9.</title>
        <authorList>
            <person name="Humphray S.J."/>
            <person name="Oliver K."/>
            <person name="Hunt A.R."/>
            <person name="Plumb R.W."/>
            <person name="Loveland J.E."/>
            <person name="Howe K.L."/>
            <person name="Andrews T.D."/>
            <person name="Searle S."/>
            <person name="Hunt S.E."/>
            <person name="Scott C.E."/>
            <person name="Jones M.C."/>
            <person name="Ainscough R."/>
            <person name="Almeida J.P."/>
            <person name="Ambrose K.D."/>
            <person name="Ashwell R.I.S."/>
            <person name="Babbage A.K."/>
            <person name="Babbage S."/>
            <person name="Bagguley C.L."/>
            <person name="Bailey J."/>
            <person name="Banerjee R."/>
            <person name="Barker D.J."/>
            <person name="Barlow K.F."/>
            <person name="Bates K."/>
            <person name="Beasley H."/>
            <person name="Beasley O."/>
            <person name="Bird C.P."/>
            <person name="Bray-Allen S."/>
            <person name="Brown A.J."/>
            <person name="Brown J.Y."/>
            <person name="Burford D."/>
            <person name="Burrill W."/>
            <person name="Burton J."/>
            <person name="Carder C."/>
            <person name="Carter N.P."/>
            <person name="Chapman J.C."/>
            <person name="Chen Y."/>
            <person name="Clarke G."/>
            <person name="Clark S.Y."/>
            <person name="Clee C.M."/>
            <person name="Clegg S."/>
            <person name="Collier R.E."/>
            <person name="Corby N."/>
            <person name="Crosier M."/>
            <person name="Cummings A.T."/>
            <person name="Davies J."/>
            <person name="Dhami P."/>
            <person name="Dunn M."/>
            <person name="Dutta I."/>
            <person name="Dyer L.W."/>
            <person name="Earthrowl M.E."/>
            <person name="Faulkner L."/>
            <person name="Fleming C.J."/>
            <person name="Frankish A."/>
            <person name="Frankland J.A."/>
            <person name="French L."/>
            <person name="Fricker D.G."/>
            <person name="Garner P."/>
            <person name="Garnett J."/>
            <person name="Ghori J."/>
            <person name="Gilbert J.G.R."/>
            <person name="Glison C."/>
            <person name="Grafham D.V."/>
            <person name="Gribble S."/>
            <person name="Griffiths C."/>
            <person name="Griffiths-Jones S."/>
            <person name="Grocock R."/>
            <person name="Guy J."/>
            <person name="Hall R.E."/>
            <person name="Hammond S."/>
            <person name="Harley J.L."/>
            <person name="Harrison E.S.I."/>
            <person name="Hart E.A."/>
            <person name="Heath P.D."/>
            <person name="Henderson C.D."/>
            <person name="Hopkins B.L."/>
            <person name="Howard P.J."/>
            <person name="Howden P.J."/>
            <person name="Huckle E."/>
            <person name="Johnson C."/>
            <person name="Johnson D."/>
            <person name="Joy A.A."/>
            <person name="Kay M."/>
            <person name="Keenan S."/>
            <person name="Kershaw J.K."/>
            <person name="Kimberley A.M."/>
            <person name="King A."/>
            <person name="Knights A."/>
            <person name="Laird G.K."/>
            <person name="Langford C."/>
            <person name="Lawlor S."/>
            <person name="Leongamornlert D.A."/>
            <person name="Leversha M."/>
            <person name="Lloyd C."/>
            <person name="Lloyd D.M."/>
            <person name="Lovell J."/>
            <person name="Martin S."/>
            <person name="Mashreghi-Mohammadi M."/>
            <person name="Matthews L."/>
            <person name="McLaren S."/>
            <person name="McLay K.E."/>
            <person name="McMurray A."/>
            <person name="Milne S."/>
            <person name="Nickerson T."/>
            <person name="Nisbett J."/>
            <person name="Nordsiek G."/>
            <person name="Pearce A.V."/>
            <person name="Peck A.I."/>
            <person name="Porter K.M."/>
            <person name="Pandian R."/>
            <person name="Pelan S."/>
            <person name="Phillimore B."/>
            <person name="Povey S."/>
            <person name="Ramsey Y."/>
            <person name="Rand V."/>
            <person name="Scharfe M."/>
            <person name="Sehra H.K."/>
            <person name="Shownkeen R."/>
            <person name="Sims S.K."/>
            <person name="Skuce C.D."/>
            <person name="Smith M."/>
            <person name="Steward C.A."/>
            <person name="Swarbreck D."/>
            <person name="Sycamore N."/>
            <person name="Tester J."/>
            <person name="Thorpe A."/>
            <person name="Tracey A."/>
            <person name="Tromans A."/>
            <person name="Thomas D.W."/>
            <person name="Wall M."/>
            <person name="Wallis J.M."/>
            <person name="West A.P."/>
            <person name="Whitehead S.L."/>
            <person name="Willey D.L."/>
            <person name="Williams S.A."/>
            <person name="Wilming L."/>
            <person name="Wray P.W."/>
            <person name="Young L."/>
            <person name="Ashurst J.L."/>
            <person name="Coulson A."/>
            <person name="Blocker H."/>
            <person name="Durbin R.M."/>
            <person name="Sulston J.E."/>
            <person name="Hubbard T."/>
            <person name="Jackson M.J."/>
            <person name="Bentley D.R."/>
            <person name="Beck S."/>
            <person name="Rogers J."/>
            <person name="Dunham I."/>
        </authorList>
    </citation>
    <scope>NUCLEOTIDE SEQUENCE [LARGE SCALE GENOMIC DNA]</scope>
</reference>
<reference key="3">
    <citation type="journal article" date="2005" name="Genomics">
        <title>A reciprocal translocation 46,XY,t(8;9)(p11.2;q13) in a bladder exstrophy patient disrupts CNTNAP3 and presents evidence of a pericentromeric duplication on chromosome 9.</title>
        <authorList>
            <person name="Boyadjiev S.A."/>
            <person name="South S.T."/>
            <person name="Radford C.L."/>
            <person name="Patel A."/>
            <person name="Zhang G."/>
            <person name="Hur D.J."/>
            <person name="Thomas G.H."/>
            <person name="Gearhart J.P."/>
            <person name="Stetten G."/>
        </authorList>
    </citation>
    <scope>GENE DUPLICATION</scope>
</reference>
<dbReference type="EMBL" id="AK054645">
    <property type="protein sequence ID" value="BAB70782.1"/>
    <property type="molecule type" value="mRNA"/>
</dbReference>
<dbReference type="EMBL" id="AL953854">
    <property type="status" value="NOT_ANNOTATED_CDS"/>
    <property type="molecule type" value="Genomic_DNA"/>
</dbReference>
<dbReference type="EMBL" id="BX664735">
    <property type="protein sequence ID" value="CAI16324.1"/>
    <property type="status" value="ALT_SEQ"/>
    <property type="molecule type" value="Genomic_DNA"/>
</dbReference>
<dbReference type="EMBL" id="BX649569">
    <property type="protein sequence ID" value="CAI16324.1"/>
    <property type="status" value="JOINED"/>
    <property type="molecule type" value="Genomic_DNA"/>
</dbReference>
<dbReference type="EMBL" id="CR788268">
    <property type="protein sequence ID" value="CAI16324.1"/>
    <property type="status" value="JOINED"/>
    <property type="molecule type" value="Genomic_DNA"/>
</dbReference>
<dbReference type="EMBL" id="BX664735">
    <property type="protein sequence ID" value="CAI16325.1"/>
    <property type="status" value="ALT_SEQ"/>
    <property type="molecule type" value="Genomic_DNA"/>
</dbReference>
<dbReference type="EMBL" id="BX649569">
    <property type="protein sequence ID" value="CAI16325.1"/>
    <property type="status" value="JOINED"/>
    <property type="molecule type" value="Genomic_DNA"/>
</dbReference>
<dbReference type="EMBL" id="CR788268">
    <property type="protein sequence ID" value="CAI16325.1"/>
    <property type="status" value="JOINED"/>
    <property type="molecule type" value="Genomic_DNA"/>
</dbReference>
<dbReference type="EMBL" id="BX664735">
    <property type="protein sequence ID" value="CAI16326.1"/>
    <property type="molecule type" value="Genomic_DNA"/>
</dbReference>
<dbReference type="EMBL" id="BX649569">
    <property type="protein sequence ID" value="CAI16326.1"/>
    <property type="status" value="JOINED"/>
    <property type="molecule type" value="Genomic_DNA"/>
</dbReference>
<dbReference type="EMBL" id="CR788268">
    <property type="protein sequence ID" value="CAI16326.1"/>
    <property type="status" value="JOINED"/>
    <property type="molecule type" value="Genomic_DNA"/>
</dbReference>
<dbReference type="EMBL" id="BX664735">
    <property type="protein sequence ID" value="CAI95321.1"/>
    <property type="status" value="ALT_SEQ"/>
    <property type="molecule type" value="Genomic_DNA"/>
</dbReference>
<dbReference type="EMBL" id="BX649569">
    <property type="protein sequence ID" value="CAI95321.1"/>
    <property type="status" value="JOINED"/>
    <property type="molecule type" value="Genomic_DNA"/>
</dbReference>
<dbReference type="EMBL" id="CR788268">
    <property type="protein sequence ID" value="CAI95321.1"/>
    <property type="status" value="JOINED"/>
    <property type="molecule type" value="Genomic_DNA"/>
</dbReference>
<dbReference type="CCDS" id="CCDS75836.1">
    <molecule id="Q96NU0-1"/>
</dbReference>
<dbReference type="RefSeq" id="NP_001188309.2">
    <molecule id="Q96NU0-1"/>
    <property type="nucleotide sequence ID" value="NM_001201380.3"/>
</dbReference>
<dbReference type="SMR" id="Q96NU0"/>
<dbReference type="FunCoup" id="Q96NU0">
    <property type="interactions" value="411"/>
</dbReference>
<dbReference type="IntAct" id="Q96NU0">
    <property type="interactions" value="46"/>
</dbReference>
<dbReference type="STRING" id="9606.ENSP00000478671"/>
<dbReference type="GlyCosmos" id="Q96NU0">
    <property type="glycosylation" value="3 sites, 2 glycans"/>
</dbReference>
<dbReference type="GlyGen" id="Q96NU0">
    <property type="glycosylation" value="6 sites, 2 N-linked glycans (2 sites), 2 O-linked glycans (1 site)"/>
</dbReference>
<dbReference type="iPTMnet" id="Q96NU0"/>
<dbReference type="PhosphoSitePlus" id="Q96NU0"/>
<dbReference type="BioMuta" id="CNTNAP3B"/>
<dbReference type="DMDM" id="190358858"/>
<dbReference type="jPOST" id="Q96NU0"/>
<dbReference type="MassIVE" id="Q96NU0"/>
<dbReference type="PaxDb" id="9606-ENSP00000478671"/>
<dbReference type="PeptideAtlas" id="Q96NU0"/>
<dbReference type="ProteomicsDB" id="77558">
    <molecule id="Q96NU0-1"/>
</dbReference>
<dbReference type="ProteomicsDB" id="77559">
    <molecule id="Q96NU0-2"/>
</dbReference>
<dbReference type="TopDownProteomics" id="Q96NU0-2">
    <molecule id="Q96NU0-2"/>
</dbReference>
<dbReference type="Antibodypedia" id="58807">
    <property type="antibodies" value="23 antibodies from 4 providers"/>
</dbReference>
<dbReference type="DNASU" id="728577"/>
<dbReference type="Ensembl" id="ENST00000377561.7">
    <molecule id="Q96NU0-1"/>
    <property type="protein sequence ID" value="ENSP00000478671.2"/>
    <property type="gene ID" value="ENSG00000154529.15"/>
</dbReference>
<dbReference type="GeneID" id="728577"/>
<dbReference type="KEGG" id="hsa:728577"/>
<dbReference type="MANE-Select" id="ENST00000377561.7">
    <property type="protein sequence ID" value="ENSP00000478671.2"/>
    <property type="RefSeq nucleotide sequence ID" value="NM_001201380.3"/>
    <property type="RefSeq protein sequence ID" value="NP_001188309.2"/>
</dbReference>
<dbReference type="UCSC" id="uc064thx.1">
    <molecule id="Q96NU0-1"/>
    <property type="organism name" value="human"/>
</dbReference>
<dbReference type="AGR" id="HGNC:32035"/>
<dbReference type="CTD" id="728577"/>
<dbReference type="GeneCards" id="CNTNAP3B"/>
<dbReference type="HGNC" id="HGNC:32035">
    <property type="gene designation" value="CNTNAP3B"/>
</dbReference>
<dbReference type="HPA" id="ENSG00000154529">
    <property type="expression patterns" value="Low tissue specificity"/>
</dbReference>
<dbReference type="neXtProt" id="NX_Q96NU0"/>
<dbReference type="OpenTargets" id="ENSG00000154529"/>
<dbReference type="VEuPathDB" id="HostDB:ENSG00000154529"/>
<dbReference type="eggNOG" id="KOG3516">
    <property type="taxonomic scope" value="Eukaryota"/>
</dbReference>
<dbReference type="GeneTree" id="ENSGT00940000160228"/>
<dbReference type="HOGENOM" id="CLU_066153_0_0_1"/>
<dbReference type="InParanoid" id="Q96NU0"/>
<dbReference type="OMA" id="KNCHTTD"/>
<dbReference type="OrthoDB" id="26719at2759"/>
<dbReference type="PAN-GO" id="Q96NU0">
    <property type="GO annotations" value="0 GO annotations based on evolutionary models"/>
</dbReference>
<dbReference type="PhylomeDB" id="Q96NU0"/>
<dbReference type="TreeFam" id="TF321823"/>
<dbReference type="PathwayCommons" id="Q96NU0"/>
<dbReference type="SignaLink" id="Q96NU0"/>
<dbReference type="BioGRID-ORCS" id="728577">
    <property type="hits" value="72 hits in 1042 CRISPR screens"/>
</dbReference>
<dbReference type="ChiTaRS" id="CNTNAP3B">
    <property type="organism name" value="human"/>
</dbReference>
<dbReference type="GenomeRNAi" id="728577"/>
<dbReference type="Pharos" id="Q96NU0">
    <property type="development level" value="Tdark"/>
</dbReference>
<dbReference type="PRO" id="PR:Q96NU0"/>
<dbReference type="Proteomes" id="UP000005640">
    <property type="component" value="Chromosome 9"/>
</dbReference>
<dbReference type="RNAct" id="Q96NU0">
    <property type="molecule type" value="protein"/>
</dbReference>
<dbReference type="Bgee" id="ENSG00000154529">
    <property type="expression patterns" value="Expressed in mucosa of stomach and 100 other cell types or tissues"/>
</dbReference>
<dbReference type="ExpressionAtlas" id="Q96NU0">
    <property type="expression patterns" value="baseline and differential"/>
</dbReference>
<dbReference type="GO" id="GO:0016020">
    <property type="term" value="C:membrane"/>
    <property type="evidence" value="ECO:0007669"/>
    <property type="project" value="UniProtKB-SubCell"/>
</dbReference>
<dbReference type="GO" id="GO:0007155">
    <property type="term" value="P:cell adhesion"/>
    <property type="evidence" value="ECO:0007669"/>
    <property type="project" value="UniProtKB-KW"/>
</dbReference>
<dbReference type="CDD" id="cd00054">
    <property type="entry name" value="EGF_CA"/>
    <property type="match status" value="1"/>
</dbReference>
<dbReference type="CDD" id="cd00057">
    <property type="entry name" value="FA58C"/>
    <property type="match status" value="1"/>
</dbReference>
<dbReference type="CDD" id="cd00110">
    <property type="entry name" value="LamG"/>
    <property type="match status" value="4"/>
</dbReference>
<dbReference type="FunFam" id="2.60.120.260:FF:000016">
    <property type="entry name" value="Contactin-associated protein-like 4 isoform 1"/>
    <property type="match status" value="1"/>
</dbReference>
<dbReference type="FunFam" id="2.60.120.200:FF:000026">
    <property type="entry name" value="contactin-associated protein-like 4 isoform X1"/>
    <property type="match status" value="1"/>
</dbReference>
<dbReference type="Gene3D" id="2.60.120.1000">
    <property type="match status" value="1"/>
</dbReference>
<dbReference type="Gene3D" id="2.60.120.200">
    <property type="match status" value="4"/>
</dbReference>
<dbReference type="Gene3D" id="2.60.120.260">
    <property type="entry name" value="Galactose-binding domain-like"/>
    <property type="match status" value="1"/>
</dbReference>
<dbReference type="Gene3D" id="2.10.25.10">
    <property type="entry name" value="Laminin"/>
    <property type="match status" value="2"/>
</dbReference>
<dbReference type="InterPro" id="IPR013320">
    <property type="entry name" value="ConA-like_dom_sf"/>
</dbReference>
<dbReference type="InterPro" id="IPR000742">
    <property type="entry name" value="EGF-like_dom"/>
</dbReference>
<dbReference type="InterPro" id="IPR000421">
    <property type="entry name" value="FA58C"/>
</dbReference>
<dbReference type="InterPro" id="IPR036056">
    <property type="entry name" value="Fibrinogen-like_C"/>
</dbReference>
<dbReference type="InterPro" id="IPR002181">
    <property type="entry name" value="Fibrinogen_a/b/g_C_dom"/>
</dbReference>
<dbReference type="InterPro" id="IPR008979">
    <property type="entry name" value="Galactose-bd-like_sf"/>
</dbReference>
<dbReference type="InterPro" id="IPR001791">
    <property type="entry name" value="Laminin_G"/>
</dbReference>
<dbReference type="InterPro" id="IPR050372">
    <property type="entry name" value="Neurexin-related_CASP"/>
</dbReference>
<dbReference type="NCBIfam" id="NF040941">
    <property type="entry name" value="GGGWT_bact"/>
    <property type="match status" value="1"/>
</dbReference>
<dbReference type="PANTHER" id="PTHR15036:SF36">
    <property type="entry name" value="CONTACTIN-ASSOCIATED PROTEIN-LIKE 3-RELATED"/>
    <property type="match status" value="1"/>
</dbReference>
<dbReference type="PANTHER" id="PTHR15036">
    <property type="entry name" value="PIKACHURIN-LIKE PROTEIN"/>
    <property type="match status" value="1"/>
</dbReference>
<dbReference type="Pfam" id="PF00008">
    <property type="entry name" value="EGF"/>
    <property type="match status" value="1"/>
</dbReference>
<dbReference type="Pfam" id="PF00754">
    <property type="entry name" value="F5_F8_type_C"/>
    <property type="match status" value="1"/>
</dbReference>
<dbReference type="Pfam" id="PF02210">
    <property type="entry name" value="Laminin_G_2"/>
    <property type="match status" value="4"/>
</dbReference>
<dbReference type="SMART" id="SM00181">
    <property type="entry name" value="EGF"/>
    <property type="match status" value="2"/>
</dbReference>
<dbReference type="SMART" id="SM00231">
    <property type="entry name" value="FA58C"/>
    <property type="match status" value="1"/>
</dbReference>
<dbReference type="SMART" id="SM00282">
    <property type="entry name" value="LamG"/>
    <property type="match status" value="4"/>
</dbReference>
<dbReference type="SUPFAM" id="SSF49899">
    <property type="entry name" value="Concanavalin A-like lectins/glucanases"/>
    <property type="match status" value="4"/>
</dbReference>
<dbReference type="SUPFAM" id="SSF57196">
    <property type="entry name" value="EGF/Laminin"/>
    <property type="match status" value="1"/>
</dbReference>
<dbReference type="SUPFAM" id="SSF56496">
    <property type="entry name" value="Fibrinogen C-terminal domain-like"/>
    <property type="match status" value="1"/>
</dbReference>
<dbReference type="SUPFAM" id="SSF49785">
    <property type="entry name" value="Galactose-binding domain-like"/>
    <property type="match status" value="1"/>
</dbReference>
<dbReference type="PROSITE" id="PS50026">
    <property type="entry name" value="EGF_3"/>
    <property type="match status" value="2"/>
</dbReference>
<dbReference type="PROSITE" id="PS01285">
    <property type="entry name" value="FA58C_1"/>
    <property type="match status" value="1"/>
</dbReference>
<dbReference type="PROSITE" id="PS01286">
    <property type="entry name" value="FA58C_2"/>
    <property type="match status" value="1"/>
</dbReference>
<dbReference type="PROSITE" id="PS50022">
    <property type="entry name" value="FA58C_3"/>
    <property type="match status" value="1"/>
</dbReference>
<dbReference type="PROSITE" id="PS51406">
    <property type="entry name" value="FIBRINOGEN_C_2"/>
    <property type="match status" value="1"/>
</dbReference>
<dbReference type="PROSITE" id="PS50025">
    <property type="entry name" value="LAM_G_DOMAIN"/>
    <property type="match status" value="4"/>
</dbReference>
<accession>Q96NU0</accession>
<accession>A0A087WUH3</accession>
<accession>B1B0V7</accession>
<accession>B1B0V8</accession>
<accession>B1B0V9</accession>
<accession>B1B0W0</accession>
<accession>B1B0X8</accession>
<accession>B1B162</accession>
<accession>Q4VXF0</accession>
<accession>Q9H7W3</accession>
<evidence type="ECO:0000250" key="1"/>
<evidence type="ECO:0000255" key="2"/>
<evidence type="ECO:0000255" key="3">
    <source>
        <dbReference type="PROSITE-ProRule" id="PRU00076"/>
    </source>
</evidence>
<evidence type="ECO:0000255" key="4">
    <source>
        <dbReference type="PROSITE-ProRule" id="PRU00081"/>
    </source>
</evidence>
<evidence type="ECO:0000255" key="5">
    <source>
        <dbReference type="PROSITE-ProRule" id="PRU00122"/>
    </source>
</evidence>
<evidence type="ECO:0000255" key="6">
    <source>
        <dbReference type="PROSITE-ProRule" id="PRU00739"/>
    </source>
</evidence>
<evidence type="ECO:0000256" key="7">
    <source>
        <dbReference type="SAM" id="MobiDB-lite"/>
    </source>
</evidence>
<evidence type="ECO:0000303" key="8">
    <source>
    </source>
</evidence>
<evidence type="ECO:0000305" key="9"/>
<comment type="subcellular location">
    <subcellularLocation>
        <location evidence="9">Membrane</location>
        <topology evidence="9">Single-pass type I membrane protein</topology>
    </subcellularLocation>
</comment>
<comment type="alternative products">
    <event type="alternative splicing"/>
    <isoform>
        <id>Q96NU0-1</id>
        <name>1</name>
        <sequence type="displayed"/>
    </isoform>
    <isoform>
        <id>Q96NU0-2</id>
        <name>2</name>
        <sequence type="described" ref="VSP_034153 VSP_034154 VSP_034155 VSP_034156"/>
    </isoform>
</comment>
<comment type="miscellaneous">
    <text>The gene encoding CNTNAP3B is the result of a pericentromeric duplication of the genomic region encoding CNTNAP3 on chromosome 9.</text>
</comment>
<comment type="miscellaneous">
    <molecule>Isoform 2</molecule>
    <text evidence="9">May be produced at very low levels due to a premature stop codon in the mRNA, leading to nonsense-mediated mRNA decay.</text>
</comment>
<comment type="similarity">
    <text evidence="9">Belongs to the neurexin family.</text>
</comment>
<comment type="sequence caution" evidence="9">
    <conflict type="erroneous gene model prediction">
        <sequence resource="EMBL-CDS" id="CAI16324"/>
    </conflict>
</comment>
<comment type="sequence caution" evidence="9">
    <conflict type="erroneous gene model prediction">
        <sequence resource="EMBL-CDS" id="CAI16325"/>
    </conflict>
</comment>
<comment type="sequence caution" evidence="9">
    <conflict type="erroneous gene model prediction">
        <sequence resource="EMBL-CDS" id="CAI95321"/>
    </conflict>
</comment>
<feature type="signal peptide" evidence="2">
    <location>
        <begin position="1"/>
        <end position="25"/>
    </location>
</feature>
<feature type="chain" id="PRO_0000339353" description="Contactin-associated protein-like 3B">
    <location>
        <begin position="26"/>
        <end position="1288"/>
    </location>
</feature>
<feature type="topological domain" description="Extracellular" evidence="2">
    <location>
        <begin position="26"/>
        <end position="1245"/>
    </location>
</feature>
<feature type="transmembrane region" description="Helical" evidence="2">
    <location>
        <begin position="1246"/>
        <end position="1266"/>
    </location>
</feature>
<feature type="topological domain" description="Cytoplasmic" evidence="2">
    <location>
        <begin position="1267"/>
        <end position="1288"/>
    </location>
</feature>
<feature type="domain" description="F5/8 type C" evidence="4">
    <location>
        <begin position="31"/>
        <end position="177"/>
    </location>
</feature>
<feature type="domain" description="Laminin G-like 1" evidence="5">
    <location>
        <begin position="183"/>
        <end position="364"/>
    </location>
</feature>
<feature type="domain" description="Laminin G-like 2" evidence="5">
    <location>
        <begin position="370"/>
        <end position="545"/>
    </location>
</feature>
<feature type="domain" description="EGF-like 1" evidence="3">
    <location>
        <begin position="547"/>
        <end position="584"/>
    </location>
</feature>
<feature type="domain" description="Fibrinogen C-terminal" evidence="6">
    <location>
        <begin position="585"/>
        <end position="792"/>
    </location>
</feature>
<feature type="domain" description="Laminin G-like 3" evidence="5">
    <location>
        <begin position="793"/>
        <end position="958"/>
    </location>
</feature>
<feature type="domain" description="EGF-like 2" evidence="3">
    <location>
        <begin position="959"/>
        <end position="997"/>
    </location>
</feature>
<feature type="domain" description="Laminin G-like 4" evidence="5">
    <location>
        <begin position="1016"/>
        <end position="1203"/>
    </location>
</feature>
<feature type="region of interest" description="Disordered" evidence="7">
    <location>
        <begin position="23"/>
        <end position="61"/>
    </location>
</feature>
<feature type="region of interest" description="Disordered" evidence="7">
    <location>
        <begin position="1215"/>
        <end position="1236"/>
    </location>
</feature>
<feature type="compositionally biased region" description="Low complexity" evidence="7">
    <location>
        <begin position="33"/>
        <end position="59"/>
    </location>
</feature>
<feature type="glycosylation site" description="N-linked (GlcNAc...) asparagine" evidence="2">
    <location>
        <position position="359"/>
    </location>
</feature>
<feature type="glycosylation site" description="N-linked (GlcNAc...) asparagine" evidence="2">
    <location>
        <position position="706"/>
    </location>
</feature>
<feature type="disulfide bond" evidence="1">
    <location>
        <begin position="31"/>
        <end position="177"/>
    </location>
</feature>
<feature type="disulfide bond" evidence="1">
    <location>
        <begin position="332"/>
        <end position="364"/>
    </location>
</feature>
<feature type="disulfide bond" evidence="1">
    <location>
        <begin position="513"/>
        <end position="545"/>
    </location>
</feature>
<feature type="disulfide bond" evidence="1">
    <location>
        <begin position="551"/>
        <end position="562"/>
    </location>
</feature>
<feature type="disulfide bond" evidence="1">
    <location>
        <begin position="556"/>
        <end position="571"/>
    </location>
</feature>
<feature type="disulfide bond" evidence="1">
    <location>
        <begin position="573"/>
        <end position="583"/>
    </location>
</feature>
<feature type="disulfide bond" evidence="1">
    <location>
        <begin position="931"/>
        <end position="958"/>
    </location>
</feature>
<feature type="disulfide bond" evidence="1">
    <location>
        <begin position="962"/>
        <end position="975"/>
    </location>
</feature>
<feature type="disulfide bond" evidence="1">
    <location>
        <begin position="969"/>
        <end position="984"/>
    </location>
</feature>
<feature type="disulfide bond" evidence="1">
    <location>
        <begin position="986"/>
        <end position="996"/>
    </location>
</feature>
<feature type="disulfide bond" evidence="1">
    <location>
        <begin position="1167"/>
        <end position="1203"/>
    </location>
</feature>
<feature type="splice variant" id="VSP_034153" description="In isoform 2." evidence="8">
    <original>GCLGNSSGSGCKSPLGGFQGCLRLITIGDKAVDPILVQQGALGSFRDLQIDSCGITDRCLPSYCEHGGECSQSWDTFSCDCLGTGYTGETCHSS</original>
    <variation>A</variation>
    <location>
        <begin position="493"/>
        <end position="586"/>
    </location>
</feature>
<feature type="splice variant" id="VSP_034154" description="In isoform 2." evidence="8">
    <location>
        <position position="626"/>
    </location>
</feature>
<feature type="splice variant" id="VSP_034155" description="In isoform 2." evidence="8">
    <original>DGTPL</original>
    <variation>GLVTQ</variation>
    <location>
        <begin position="694"/>
        <end position="698"/>
    </location>
</feature>
<feature type="splice variant" id="VSP_034156" description="In isoform 2." evidence="8">
    <location>
        <begin position="699"/>
        <end position="1288"/>
    </location>
</feature>
<feature type="sequence conflict" description="In Ref. 1; BAB70782." evidence="9" ref="1">
    <original>S</original>
    <variation>A</variation>
    <location>
        <position position="33"/>
    </location>
</feature>
<feature type="sequence conflict" description="In Ref. 1; BAB70782." evidence="9" ref="1">
    <original>LS</original>
    <variation>PT</variation>
    <location>
        <begin position="316"/>
        <end position="317"/>
    </location>
</feature>
<feature type="sequence conflict" description="In Ref. 1; BAB70782." evidence="9" ref="1">
    <original>R</original>
    <variation>S</variation>
    <location>
        <position position="414"/>
    </location>
</feature>
<feature type="sequence conflict" description="In Ref. 1; BAB70782." evidence="9" ref="1">
    <original>V</original>
    <variation>I</variation>
    <location>
        <position position="420"/>
    </location>
</feature>
<feature type="sequence conflict" description="In Ref. 1; BAB70782." evidence="9" ref="1">
    <original>P</original>
    <variation>L</variation>
    <location>
        <position position="439"/>
    </location>
</feature>
<feature type="sequence conflict" description="In Ref. 1; BAB70782." evidence="9" ref="1">
    <original>L</original>
    <variation>R</variation>
    <location>
        <position position="652"/>
    </location>
</feature>
<feature type="sequence conflict" description="In Ref. 2; CAI16324/CAI16326." evidence="9" ref="2">
    <original>H</original>
    <variation>Y</variation>
    <location>
        <position position="1032"/>
    </location>
</feature>
<feature type="sequence conflict" description="In Ref. 2; CAI16324/CAI16326." evidence="9" ref="2">
    <original>T</original>
    <variation>S</variation>
    <location>
        <position position="1051"/>
    </location>
</feature>
<feature type="sequence conflict" description="In Ref. 2; CAI16326." evidence="9" ref="2">
    <original>C</original>
    <variation>R</variation>
    <location>
        <position position="1175"/>
    </location>
</feature>
<feature type="sequence conflict" description="In Ref. 2; CAI16326." evidence="9" ref="2">
    <original>I</original>
    <variation>M</variation>
    <location>
        <position position="1247"/>
    </location>
</feature>
<feature type="sequence conflict" description="In Ref. 2; CAI16326." evidence="9" ref="2">
    <original>E</original>
    <variation>V</variation>
    <location>
        <position position="1254"/>
    </location>
</feature>
<name>CNT3B_HUMAN</name>
<keyword id="KW-0025">Alternative splicing</keyword>
<keyword id="KW-0130">Cell adhesion</keyword>
<keyword id="KW-1015">Disulfide bond</keyword>
<keyword id="KW-0245">EGF-like domain</keyword>
<keyword id="KW-0325">Glycoprotein</keyword>
<keyword id="KW-0472">Membrane</keyword>
<keyword id="KW-1267">Proteomics identification</keyword>
<keyword id="KW-1185">Reference proteome</keyword>
<keyword id="KW-0677">Repeat</keyword>
<keyword id="KW-0732">Signal</keyword>
<keyword id="KW-0812">Transmembrane</keyword>
<keyword id="KW-1133">Transmembrane helix</keyword>